<comment type="function">
    <text evidence="1">Catalyzes the ATP-dependent 2-thiolation of cytidine in position 32 of tRNA, to form 2-thiocytidine (s(2)C32). The sulfur atoms are provided by the cysteine/cysteine desulfurase (IscS) system.</text>
</comment>
<comment type="catalytic activity">
    <reaction evidence="1">
        <text>cytidine(32) in tRNA + S-sulfanyl-L-cysteinyl-[cysteine desulfurase] + AH2 + ATP = 2-thiocytidine(32) in tRNA + L-cysteinyl-[cysteine desulfurase] + A + AMP + diphosphate + H(+)</text>
        <dbReference type="Rhea" id="RHEA:57048"/>
        <dbReference type="Rhea" id="RHEA-COMP:10288"/>
        <dbReference type="Rhea" id="RHEA-COMP:12157"/>
        <dbReference type="Rhea" id="RHEA-COMP:12158"/>
        <dbReference type="Rhea" id="RHEA-COMP:14821"/>
        <dbReference type="ChEBI" id="CHEBI:13193"/>
        <dbReference type="ChEBI" id="CHEBI:15378"/>
        <dbReference type="ChEBI" id="CHEBI:17499"/>
        <dbReference type="ChEBI" id="CHEBI:29950"/>
        <dbReference type="ChEBI" id="CHEBI:30616"/>
        <dbReference type="ChEBI" id="CHEBI:33019"/>
        <dbReference type="ChEBI" id="CHEBI:61963"/>
        <dbReference type="ChEBI" id="CHEBI:82748"/>
        <dbReference type="ChEBI" id="CHEBI:141453"/>
        <dbReference type="ChEBI" id="CHEBI:456215"/>
    </reaction>
    <physiologicalReaction direction="left-to-right" evidence="1">
        <dbReference type="Rhea" id="RHEA:57049"/>
    </physiologicalReaction>
</comment>
<comment type="cofactor">
    <cofactor evidence="1">
        <name>Mg(2+)</name>
        <dbReference type="ChEBI" id="CHEBI:18420"/>
    </cofactor>
</comment>
<comment type="cofactor">
    <cofactor evidence="1">
        <name>[4Fe-4S] cluster</name>
        <dbReference type="ChEBI" id="CHEBI:49883"/>
    </cofactor>
    <text evidence="1">Binds 1 [4Fe-4S] cluster per subunit. The cluster is chelated by three Cys residues, the fourth Fe has a free coordination site that may bind a sulfur atom transferred from the persulfide of IscS.</text>
</comment>
<comment type="pathway">
    <text evidence="1">tRNA modification.</text>
</comment>
<comment type="subunit">
    <text evidence="1">Homodimer.</text>
</comment>
<comment type="subcellular location">
    <subcellularLocation>
        <location evidence="1">Cytoplasm</location>
    </subcellularLocation>
</comment>
<comment type="miscellaneous">
    <text evidence="1">The thiolation reaction likely consists of two steps: a first activation step by ATP to form an adenylated intermediate of the target base of tRNA, and a second nucleophilic substitution step of the sulfur (S) atom supplied by the hydrosulfide attached to the Fe-S cluster.</text>
</comment>
<comment type="similarity">
    <text evidence="1">Belongs to the TtcA family.</text>
</comment>
<dbReference type="EC" id="2.8.1.-" evidence="1"/>
<dbReference type="EMBL" id="BA000031">
    <property type="protein sequence ID" value="BAC59796.1"/>
    <property type="molecule type" value="Genomic_DNA"/>
</dbReference>
<dbReference type="RefSeq" id="NP_797912.1">
    <property type="nucleotide sequence ID" value="NC_004603.1"/>
</dbReference>
<dbReference type="RefSeq" id="WP_005477636.1">
    <property type="nucleotide sequence ID" value="NC_004603.1"/>
</dbReference>
<dbReference type="SMR" id="Q87PG9"/>
<dbReference type="GeneID" id="1189040"/>
<dbReference type="KEGG" id="vpa:VP1533"/>
<dbReference type="PATRIC" id="fig|223926.6.peg.1464"/>
<dbReference type="eggNOG" id="COG0037">
    <property type="taxonomic scope" value="Bacteria"/>
</dbReference>
<dbReference type="HOGENOM" id="CLU_026481_0_0_6"/>
<dbReference type="Proteomes" id="UP000002493">
    <property type="component" value="Chromosome 1"/>
</dbReference>
<dbReference type="GO" id="GO:0005737">
    <property type="term" value="C:cytoplasm"/>
    <property type="evidence" value="ECO:0007669"/>
    <property type="project" value="UniProtKB-SubCell"/>
</dbReference>
<dbReference type="GO" id="GO:0051539">
    <property type="term" value="F:4 iron, 4 sulfur cluster binding"/>
    <property type="evidence" value="ECO:0007669"/>
    <property type="project" value="UniProtKB-UniRule"/>
</dbReference>
<dbReference type="GO" id="GO:0005524">
    <property type="term" value="F:ATP binding"/>
    <property type="evidence" value="ECO:0007669"/>
    <property type="project" value="UniProtKB-UniRule"/>
</dbReference>
<dbReference type="GO" id="GO:0000287">
    <property type="term" value="F:magnesium ion binding"/>
    <property type="evidence" value="ECO:0007669"/>
    <property type="project" value="UniProtKB-UniRule"/>
</dbReference>
<dbReference type="GO" id="GO:0016783">
    <property type="term" value="F:sulfurtransferase activity"/>
    <property type="evidence" value="ECO:0007669"/>
    <property type="project" value="UniProtKB-UniRule"/>
</dbReference>
<dbReference type="GO" id="GO:0000049">
    <property type="term" value="F:tRNA binding"/>
    <property type="evidence" value="ECO:0007669"/>
    <property type="project" value="UniProtKB-KW"/>
</dbReference>
<dbReference type="GO" id="GO:0034227">
    <property type="term" value="P:tRNA thio-modification"/>
    <property type="evidence" value="ECO:0007669"/>
    <property type="project" value="UniProtKB-UniRule"/>
</dbReference>
<dbReference type="CDD" id="cd24138">
    <property type="entry name" value="TtcA-like"/>
    <property type="match status" value="1"/>
</dbReference>
<dbReference type="Gene3D" id="3.40.50.620">
    <property type="entry name" value="HUPs"/>
    <property type="match status" value="1"/>
</dbReference>
<dbReference type="HAMAP" id="MF_01850">
    <property type="entry name" value="TtcA"/>
    <property type="match status" value="1"/>
</dbReference>
<dbReference type="InterPro" id="IPR014729">
    <property type="entry name" value="Rossmann-like_a/b/a_fold"/>
</dbReference>
<dbReference type="InterPro" id="IPR011063">
    <property type="entry name" value="TilS/TtcA_N"/>
</dbReference>
<dbReference type="InterPro" id="IPR012089">
    <property type="entry name" value="tRNA_Cyd_32_2_STrfase"/>
</dbReference>
<dbReference type="InterPro" id="IPR035107">
    <property type="entry name" value="tRNA_thiolation_TtcA_Ctu1"/>
</dbReference>
<dbReference type="NCBIfam" id="NF007972">
    <property type="entry name" value="PRK10696.1"/>
    <property type="match status" value="1"/>
</dbReference>
<dbReference type="PANTHER" id="PTHR43686:SF1">
    <property type="entry name" value="AMINOTRAN_5 DOMAIN-CONTAINING PROTEIN"/>
    <property type="match status" value="1"/>
</dbReference>
<dbReference type="PANTHER" id="PTHR43686">
    <property type="entry name" value="SULFURTRANSFERASE-RELATED"/>
    <property type="match status" value="1"/>
</dbReference>
<dbReference type="Pfam" id="PF01171">
    <property type="entry name" value="ATP_bind_3"/>
    <property type="match status" value="1"/>
</dbReference>
<dbReference type="PIRSF" id="PIRSF004976">
    <property type="entry name" value="ATPase_YdaO"/>
    <property type="match status" value="1"/>
</dbReference>
<dbReference type="SUPFAM" id="SSF52402">
    <property type="entry name" value="Adenine nucleotide alpha hydrolases-like"/>
    <property type="match status" value="1"/>
</dbReference>
<name>TTCA_VIBPA</name>
<protein>
    <recommendedName>
        <fullName evidence="1">tRNA-cytidine(32) 2-sulfurtransferase</fullName>
        <ecNumber evidence="1">2.8.1.-</ecNumber>
    </recommendedName>
    <alternativeName>
        <fullName evidence="1">Two-thiocytidine biosynthesis protein A</fullName>
    </alternativeName>
    <alternativeName>
        <fullName evidence="1">tRNA 2-thiocytidine biosynthesis protein TtcA</fullName>
    </alternativeName>
</protein>
<accession>Q87PG9</accession>
<gene>
    <name evidence="1" type="primary">ttcA</name>
    <name type="ordered locus">VP1533</name>
</gene>
<organism>
    <name type="scientific">Vibrio parahaemolyticus serotype O3:K6 (strain RIMD 2210633)</name>
    <dbReference type="NCBI Taxonomy" id="223926"/>
    <lineage>
        <taxon>Bacteria</taxon>
        <taxon>Pseudomonadati</taxon>
        <taxon>Pseudomonadota</taxon>
        <taxon>Gammaproteobacteria</taxon>
        <taxon>Vibrionales</taxon>
        <taxon>Vibrionaceae</taxon>
        <taxon>Vibrio</taxon>
    </lineage>
</organism>
<sequence length="297" mass="33891">MNQKDTRKETLEFNKLQKRLRRNVGNAITDYNMIEEGDVVMACISGGKDSFAMLDILLNLQKAAPIKFEVVAVNLDQKQPGFPEHILPEYFETLNIPYYIVDKDTYSVVKEKVPEGKTTCGLCSRLRRGTLYSFAEKIGATKLALGHHMDDIVETMFLNMFHGSRLKAMPPKLRSDDGRNVVIRPLTYCREKDLIKYAEHKDFPIIPCNLCGSQENLQRQAIKAMLIDWDKKTPGRVEAIFKSIQNVSPSQLADRELFDFVNLPLDRDGSREEYEFSEAVVSSTNIDESLFIDVTNI</sequence>
<reference key="1">
    <citation type="journal article" date="2003" name="Lancet">
        <title>Genome sequence of Vibrio parahaemolyticus: a pathogenic mechanism distinct from that of V. cholerae.</title>
        <authorList>
            <person name="Makino K."/>
            <person name="Oshima K."/>
            <person name="Kurokawa K."/>
            <person name="Yokoyama K."/>
            <person name="Uda T."/>
            <person name="Tagomori K."/>
            <person name="Iijima Y."/>
            <person name="Najima M."/>
            <person name="Nakano M."/>
            <person name="Yamashita A."/>
            <person name="Kubota Y."/>
            <person name="Kimura S."/>
            <person name="Yasunaga T."/>
            <person name="Honda T."/>
            <person name="Shinagawa H."/>
            <person name="Hattori M."/>
            <person name="Iida T."/>
        </authorList>
    </citation>
    <scope>NUCLEOTIDE SEQUENCE [LARGE SCALE GENOMIC DNA]</scope>
    <source>
        <strain>RIMD 2210633</strain>
    </source>
</reference>
<feature type="chain" id="PRO_0000348865" description="tRNA-cytidine(32) 2-sulfurtransferase">
    <location>
        <begin position="1"/>
        <end position="297"/>
    </location>
</feature>
<feature type="short sequence motif" description="PP-loop motif" evidence="1">
    <location>
        <begin position="45"/>
        <end position="50"/>
    </location>
</feature>
<feature type="binding site" evidence="1">
    <location>
        <position position="120"/>
    </location>
    <ligand>
        <name>[4Fe-4S] cluster</name>
        <dbReference type="ChEBI" id="CHEBI:49883"/>
    </ligand>
</feature>
<feature type="binding site" evidence="1">
    <location>
        <position position="123"/>
    </location>
    <ligand>
        <name>[4Fe-4S] cluster</name>
        <dbReference type="ChEBI" id="CHEBI:49883"/>
    </ligand>
</feature>
<feature type="binding site" evidence="1">
    <location>
        <position position="211"/>
    </location>
    <ligand>
        <name>[4Fe-4S] cluster</name>
        <dbReference type="ChEBI" id="CHEBI:49883"/>
    </ligand>
</feature>
<evidence type="ECO:0000255" key="1">
    <source>
        <dbReference type="HAMAP-Rule" id="MF_01850"/>
    </source>
</evidence>
<keyword id="KW-0004">4Fe-4S</keyword>
<keyword id="KW-0067">ATP-binding</keyword>
<keyword id="KW-0963">Cytoplasm</keyword>
<keyword id="KW-0408">Iron</keyword>
<keyword id="KW-0411">Iron-sulfur</keyword>
<keyword id="KW-0460">Magnesium</keyword>
<keyword id="KW-0479">Metal-binding</keyword>
<keyword id="KW-0547">Nucleotide-binding</keyword>
<keyword id="KW-0694">RNA-binding</keyword>
<keyword id="KW-0808">Transferase</keyword>
<keyword id="KW-0819">tRNA processing</keyword>
<keyword id="KW-0820">tRNA-binding</keyword>
<proteinExistence type="inferred from homology"/>